<feature type="chain" id="PRO_1000194305" description="Small ribosomal subunit protein eS31">
    <location>
        <begin position="1"/>
        <end position="63"/>
    </location>
</feature>
<feature type="zinc finger region" description="C4-type" evidence="1">
    <location>
        <begin position="34"/>
        <end position="56"/>
    </location>
</feature>
<feature type="binding site" evidence="1">
    <location>
        <position position="34"/>
    </location>
    <ligand>
        <name>Zn(2+)</name>
        <dbReference type="ChEBI" id="CHEBI:29105"/>
    </ligand>
</feature>
<feature type="binding site" evidence="1">
    <location>
        <position position="37"/>
    </location>
    <ligand>
        <name>Zn(2+)</name>
        <dbReference type="ChEBI" id="CHEBI:29105"/>
    </ligand>
</feature>
<feature type="binding site" evidence="1">
    <location>
        <position position="53"/>
    </location>
    <ligand>
        <name>Zn(2+)</name>
        <dbReference type="ChEBI" id="CHEBI:29105"/>
    </ligand>
</feature>
<feature type="binding site" evidence="1">
    <location>
        <position position="56"/>
    </location>
    <ligand>
        <name>Zn(2+)</name>
        <dbReference type="ChEBI" id="CHEBI:29105"/>
    </ligand>
</feature>
<proteinExistence type="inferred from homology"/>
<comment type="cofactor">
    <cofactor evidence="1">
        <name>Zn(2+)</name>
        <dbReference type="ChEBI" id="CHEBI:29105"/>
    </cofactor>
    <text evidence="1">Binds 1 zinc ion per subunit.</text>
</comment>
<comment type="subunit">
    <text evidence="1">Part of the 30S ribosomal subunit.</text>
</comment>
<comment type="similarity">
    <text evidence="1">Belongs to the eukaryotic ribosomal protein eS31 family.</text>
</comment>
<organism>
    <name type="scientific">Pyrobaculum neutrophilum (strain DSM 2338 / JCM 9278 / NBRC 100436 / V24Sta)</name>
    <name type="common">Thermoproteus neutrophilus</name>
    <dbReference type="NCBI Taxonomy" id="444157"/>
    <lineage>
        <taxon>Archaea</taxon>
        <taxon>Thermoproteota</taxon>
        <taxon>Thermoprotei</taxon>
        <taxon>Thermoproteales</taxon>
        <taxon>Thermoproteaceae</taxon>
        <taxon>Pyrobaculum</taxon>
    </lineage>
</organism>
<evidence type="ECO:0000255" key="1">
    <source>
        <dbReference type="HAMAP-Rule" id="MF_00777"/>
    </source>
</evidence>
<evidence type="ECO:0000305" key="2"/>
<dbReference type="EMBL" id="CP001014">
    <property type="protein sequence ID" value="ACB40126.1"/>
    <property type="molecule type" value="Genomic_DNA"/>
</dbReference>
<dbReference type="RefSeq" id="WP_012350545.1">
    <property type="nucleotide sequence ID" value="NC_010525.1"/>
</dbReference>
<dbReference type="SMR" id="B1Y8P7"/>
<dbReference type="STRING" id="444157.Tneu_1198"/>
<dbReference type="GeneID" id="6165164"/>
<dbReference type="KEGG" id="tne:Tneu_1198"/>
<dbReference type="eggNOG" id="arCOG04183">
    <property type="taxonomic scope" value="Archaea"/>
</dbReference>
<dbReference type="HOGENOM" id="CLU_179743_1_0_2"/>
<dbReference type="OrthoDB" id="25142at2157"/>
<dbReference type="Proteomes" id="UP000001694">
    <property type="component" value="Chromosome"/>
</dbReference>
<dbReference type="GO" id="GO:1990904">
    <property type="term" value="C:ribonucleoprotein complex"/>
    <property type="evidence" value="ECO:0007669"/>
    <property type="project" value="UniProtKB-KW"/>
</dbReference>
<dbReference type="GO" id="GO:0005840">
    <property type="term" value="C:ribosome"/>
    <property type="evidence" value="ECO:0007669"/>
    <property type="project" value="UniProtKB-KW"/>
</dbReference>
<dbReference type="GO" id="GO:0003735">
    <property type="term" value="F:structural constituent of ribosome"/>
    <property type="evidence" value="ECO:0007669"/>
    <property type="project" value="InterPro"/>
</dbReference>
<dbReference type="GO" id="GO:0008270">
    <property type="term" value="F:zinc ion binding"/>
    <property type="evidence" value="ECO:0007669"/>
    <property type="project" value="UniProtKB-UniRule"/>
</dbReference>
<dbReference type="GO" id="GO:0006412">
    <property type="term" value="P:translation"/>
    <property type="evidence" value="ECO:0007669"/>
    <property type="project" value="UniProtKB-UniRule"/>
</dbReference>
<dbReference type="Gene3D" id="6.20.50.180">
    <property type="match status" value="1"/>
</dbReference>
<dbReference type="HAMAP" id="MF_00777">
    <property type="entry name" value="Ribosomal_eS31"/>
    <property type="match status" value="1"/>
</dbReference>
<dbReference type="InterPro" id="IPR002906">
    <property type="entry name" value="Ribosomal_eS31"/>
</dbReference>
<dbReference type="InterPro" id="IPR022845">
    <property type="entry name" value="Ribosomal_eS31_arc"/>
</dbReference>
<dbReference type="InterPro" id="IPR011332">
    <property type="entry name" value="Ribosomal_zn-bd"/>
</dbReference>
<dbReference type="NCBIfam" id="NF001669">
    <property type="entry name" value="PRK00432.1"/>
    <property type="match status" value="1"/>
</dbReference>
<dbReference type="Pfam" id="PF01599">
    <property type="entry name" value="Ribosomal_S27"/>
    <property type="match status" value="1"/>
</dbReference>
<dbReference type="SMART" id="SM01402">
    <property type="entry name" value="Ribosomal_S27"/>
    <property type="match status" value="1"/>
</dbReference>
<dbReference type="SUPFAM" id="SSF57829">
    <property type="entry name" value="Zn-binding ribosomal proteins"/>
    <property type="match status" value="1"/>
</dbReference>
<reference key="1">
    <citation type="submission" date="2008-03" db="EMBL/GenBank/DDBJ databases">
        <title>Complete sequence of Thermoproteus neutrophilus V24Sta.</title>
        <authorList>
            <consortium name="US DOE Joint Genome Institute"/>
            <person name="Copeland A."/>
            <person name="Lucas S."/>
            <person name="Lapidus A."/>
            <person name="Glavina del Rio T."/>
            <person name="Dalin E."/>
            <person name="Tice H."/>
            <person name="Bruce D."/>
            <person name="Goodwin L."/>
            <person name="Pitluck S."/>
            <person name="Sims D."/>
            <person name="Brettin T."/>
            <person name="Detter J.C."/>
            <person name="Han C."/>
            <person name="Kuske C.R."/>
            <person name="Schmutz J."/>
            <person name="Larimer F."/>
            <person name="Land M."/>
            <person name="Hauser L."/>
            <person name="Kyrpides N."/>
            <person name="Mikhailova N."/>
            <person name="Biddle J.F."/>
            <person name="Zhang Z."/>
            <person name="Fitz-Gibbon S.T."/>
            <person name="Lowe T.M."/>
            <person name="Saltikov C."/>
            <person name="House C.H."/>
            <person name="Richardson P."/>
        </authorList>
    </citation>
    <scope>NUCLEOTIDE SEQUENCE [LARGE SCALE GENOMIC DNA]</scope>
    <source>
        <strain>DSM 2338 / JCM 9278 / NBRC 100436 / V24Sta</strain>
    </source>
</reference>
<sequence>MSKKAPAQKKLPRAAAWYEIDMQKGVFRFKNKLCPKCGSVMAFHREPVPRWHCGKCGFTQFQR</sequence>
<accession>B1Y8P7</accession>
<protein>
    <recommendedName>
        <fullName evidence="1">Small ribosomal subunit protein eS31</fullName>
    </recommendedName>
    <alternativeName>
        <fullName evidence="2">30S ribosomal protein S27ae</fullName>
    </alternativeName>
</protein>
<name>RS27A_PYRNV</name>
<gene>
    <name evidence="1" type="primary">rps27ae</name>
    <name type="ordered locus">Tneu_1198</name>
</gene>
<keyword id="KW-0479">Metal-binding</keyword>
<keyword id="KW-0687">Ribonucleoprotein</keyword>
<keyword id="KW-0689">Ribosomal protein</keyword>
<keyword id="KW-0862">Zinc</keyword>
<keyword id="KW-0863">Zinc-finger</keyword>